<accession>P05561</accession>
<organism>
    <name type="scientific">Nothoprocta cinerascens</name>
    <name type="common">Brushland tinamou</name>
    <name type="synonym">Nothura cinerascens</name>
    <dbReference type="NCBI Taxonomy" id="8807"/>
    <lineage>
        <taxon>Eukaryota</taxon>
        <taxon>Metazoa</taxon>
        <taxon>Chordata</taxon>
        <taxon>Craniata</taxon>
        <taxon>Vertebrata</taxon>
        <taxon>Euteleostomi</taxon>
        <taxon>Archelosauria</taxon>
        <taxon>Archosauria</taxon>
        <taxon>Dinosauria</taxon>
        <taxon>Saurischia</taxon>
        <taxon>Theropoda</taxon>
        <taxon>Coelurosauria</taxon>
        <taxon>Aves</taxon>
        <taxon>Palaeognathae</taxon>
        <taxon>Tinamiformes</taxon>
        <taxon>Tinamidae</taxon>
        <taxon>Nothoprocta</taxon>
    </lineage>
</organism>
<name>IOVO_NOTCI</name>
<proteinExistence type="evidence at protein level"/>
<evidence type="ECO:0000255" key="1">
    <source>
        <dbReference type="PROSITE-ProRule" id="PRU00798"/>
    </source>
</evidence>
<keyword id="KW-0903">Direct protein sequencing</keyword>
<keyword id="KW-1015">Disulfide bond</keyword>
<keyword id="KW-0325">Glycoprotein</keyword>
<keyword id="KW-0646">Protease inhibitor</keyword>
<keyword id="KW-0677">Repeat</keyword>
<keyword id="KW-0964">Secreted</keyword>
<keyword id="KW-0722">Serine protease inhibitor</keyword>
<comment type="subcellular location">
    <subcellularLocation>
        <location>Secreted</location>
    </subcellularLocation>
</comment>
<comment type="domain">
    <text>Avian ovomucoid consists of three homologous, tandem Kazal family inhibitory domains.</text>
</comment>
<feature type="chain" id="PRO_0000073147" description="Ovomucoid">
    <location>
        <begin position="1" status="less than"/>
        <end position="51" status="greater than"/>
    </location>
</feature>
<feature type="domain" description="Kazal-like" evidence="1">
    <location>
        <begin position="3"/>
        <end position="51"/>
    </location>
</feature>
<feature type="site" description="Reactive bond 3">
    <location>
        <begin position="15"/>
        <end position="16"/>
    </location>
</feature>
<feature type="glycosylation site" description="N-linked (GlcNAc...) asparagine">
    <location>
        <position position="42"/>
    </location>
</feature>
<feature type="disulfide bond">
    <location>
        <begin position="5"/>
        <end position="35"/>
    </location>
</feature>
<feature type="disulfide bond">
    <location>
        <begin position="13"/>
        <end position="32"/>
    </location>
</feature>
<feature type="disulfide bond">
    <location>
        <begin position="21"/>
        <end position="51"/>
    </location>
</feature>
<feature type="non-terminal residue">
    <location>
        <position position="1"/>
    </location>
</feature>
<feature type="non-terminal residue">
    <location>
        <position position="51"/>
    </location>
</feature>
<sequence>VTVDCSGYPKPACTLEYFPLCGSDNQTYANKCAFCNAVVEKNVTLRHLGKC</sequence>
<reference key="1">
    <citation type="journal article" date="1987" name="Biochemistry">
        <title>Ovomucoid third domains from 100 avian species: isolation, sequences, and hypervariability of enzyme-inhibitor contact residues.</title>
        <authorList>
            <person name="Laskowski M. Jr."/>
            <person name="Kato I."/>
            <person name="Ardelt W."/>
            <person name="Cook J."/>
            <person name="Denton A."/>
            <person name="Empie M.W."/>
            <person name="Kohr W.J."/>
            <person name="Park S.J."/>
            <person name="Parks K."/>
            <person name="Schatzley B.L."/>
            <person name="Schoenberger O.L."/>
            <person name="Tashiro M."/>
            <person name="Vichot G."/>
            <person name="Whatley H.E."/>
            <person name="Wieczorek A."/>
            <person name="Wieczorek M."/>
        </authorList>
    </citation>
    <scope>PROTEIN SEQUENCE</scope>
</reference>
<dbReference type="PIR" id="B31437">
    <property type="entry name" value="B31437"/>
</dbReference>
<dbReference type="SMR" id="P05561"/>
<dbReference type="GO" id="GO:0005576">
    <property type="term" value="C:extracellular region"/>
    <property type="evidence" value="ECO:0007669"/>
    <property type="project" value="UniProtKB-SubCell"/>
</dbReference>
<dbReference type="GO" id="GO:0004867">
    <property type="term" value="F:serine-type endopeptidase inhibitor activity"/>
    <property type="evidence" value="ECO:0007669"/>
    <property type="project" value="UniProtKB-KW"/>
</dbReference>
<dbReference type="CDD" id="cd00104">
    <property type="entry name" value="KAZAL_FS"/>
    <property type="match status" value="1"/>
</dbReference>
<dbReference type="FunFam" id="3.30.60.30:FF:000037">
    <property type="entry name" value="Ovomucoid"/>
    <property type="match status" value="1"/>
</dbReference>
<dbReference type="Gene3D" id="3.30.60.30">
    <property type="match status" value="1"/>
</dbReference>
<dbReference type="InterPro" id="IPR050159">
    <property type="entry name" value="Kazal-type_SerProtInhib"/>
</dbReference>
<dbReference type="InterPro" id="IPR002350">
    <property type="entry name" value="Kazal_dom"/>
</dbReference>
<dbReference type="InterPro" id="IPR036058">
    <property type="entry name" value="Kazal_dom_sf"/>
</dbReference>
<dbReference type="InterPro" id="IPR001239">
    <property type="entry name" value="Prot_inh_Kazal-m"/>
</dbReference>
<dbReference type="PANTHER" id="PTHR47499:SF1">
    <property type="entry name" value="SERINE PROTEASE INHIBITOR KAZAL-TYPE 7"/>
    <property type="match status" value="1"/>
</dbReference>
<dbReference type="PANTHER" id="PTHR47499">
    <property type="entry name" value="SERINE PROTEASE INHIBITOR KAZAL-TYPE 7 SPINK7"/>
    <property type="match status" value="1"/>
</dbReference>
<dbReference type="Pfam" id="PF00050">
    <property type="entry name" value="Kazal_1"/>
    <property type="match status" value="1"/>
</dbReference>
<dbReference type="PRINTS" id="PR00290">
    <property type="entry name" value="KAZALINHBTR"/>
</dbReference>
<dbReference type="SMART" id="SM00280">
    <property type="entry name" value="KAZAL"/>
    <property type="match status" value="1"/>
</dbReference>
<dbReference type="SUPFAM" id="SSF100895">
    <property type="entry name" value="Kazal-type serine protease inhibitors"/>
    <property type="match status" value="1"/>
</dbReference>
<dbReference type="PROSITE" id="PS00282">
    <property type="entry name" value="KAZAL_1"/>
    <property type="match status" value="1"/>
</dbReference>
<dbReference type="PROSITE" id="PS51465">
    <property type="entry name" value="KAZAL_2"/>
    <property type="match status" value="1"/>
</dbReference>
<protein>
    <recommendedName>
        <fullName>Ovomucoid</fullName>
    </recommendedName>
</protein>